<reference key="1">
    <citation type="journal article" date="2011" name="PLoS Genet.">
        <title>The evolution of host specialization in the vertebrate gut symbiont Lactobacillus reuteri.</title>
        <authorList>
            <person name="Frese S.A."/>
            <person name="Benson A.K."/>
            <person name="Tannock G.W."/>
            <person name="Loach D.M."/>
            <person name="Kim J."/>
            <person name="Zhang M."/>
            <person name="Oh P.L."/>
            <person name="Heng N.C."/>
            <person name="Patil P.B."/>
            <person name="Juge N."/>
            <person name="Mackenzie D.A."/>
            <person name="Pearson B.M."/>
            <person name="Lapidus A."/>
            <person name="Dalin E."/>
            <person name="Tice H."/>
            <person name="Goltsman E."/>
            <person name="Land M."/>
            <person name="Hauser L."/>
            <person name="Ivanova N."/>
            <person name="Kyrpides N.C."/>
            <person name="Walter J."/>
        </authorList>
    </citation>
    <scope>NUCLEOTIDE SEQUENCE [LARGE SCALE GENOMIC DNA]</scope>
    <source>
        <strain>DSM 20016</strain>
    </source>
</reference>
<evidence type="ECO:0000255" key="1">
    <source>
        <dbReference type="HAMAP-Rule" id="MF_00072"/>
    </source>
</evidence>
<feature type="chain" id="PRO_1000057487" description="Peptide chain release factor 3">
    <location>
        <begin position="1"/>
        <end position="525"/>
    </location>
</feature>
<feature type="domain" description="tr-type G">
    <location>
        <begin position="11"/>
        <end position="279"/>
    </location>
</feature>
<feature type="binding site" evidence="1">
    <location>
        <begin position="20"/>
        <end position="27"/>
    </location>
    <ligand>
        <name>GTP</name>
        <dbReference type="ChEBI" id="CHEBI:37565"/>
    </ligand>
</feature>
<feature type="binding site" evidence="1">
    <location>
        <begin position="88"/>
        <end position="92"/>
    </location>
    <ligand>
        <name>GTP</name>
        <dbReference type="ChEBI" id="CHEBI:37565"/>
    </ligand>
</feature>
<feature type="binding site" evidence="1">
    <location>
        <begin position="142"/>
        <end position="145"/>
    </location>
    <ligand>
        <name>GTP</name>
        <dbReference type="ChEBI" id="CHEBI:37565"/>
    </ligand>
</feature>
<keyword id="KW-0963">Cytoplasm</keyword>
<keyword id="KW-0342">GTP-binding</keyword>
<keyword id="KW-0547">Nucleotide-binding</keyword>
<keyword id="KW-0648">Protein biosynthesis</keyword>
<keyword id="KW-1185">Reference proteome</keyword>
<accession>A5VL77</accession>
<sequence length="525" mass="59477">MSPKELAEAVNKRRTFAIISHPDAGKTTITEQLLLFGGVVREAGTVKARKTGNFAKSDWMEIEKKRGISVTSSVMQFDFQGKRINILDTPGHEDFSEDTYRTLMAVDSAVMVIDSAKGIEPQTKKLFQICKMRGIPIFTFMNKFDRDAREPLDLLNEVEDVLGIETYPINWPIGSGHQFKGIYDRFNHRVALTHPADENNPYLPLDEDGNVEGDNPLAGDGEWQDAMDGMELVEVAGNELDQEKIAKGDQTPVFFGSALTNFGVQTFLETYLQFAPAPSDHKTEDGDVVKPLDPEFSGFVFKIQANMNPRHRDRIAFVRICSGEFDRGMDVTLSRTKKPMRLSNVTEFMADTRENVETAVAGDIIGLYDTGNFQIGDSIYNGKKDIQFEKLPQFTPELFVRVSAKNVMKQKSFHKGINQLVQEGAVQLYRSYSTGDYILGAVGQLQFEVFKFRMQNEYNSEVVMEPMGTKTARWIDPDQLDEKMSSSRNILVKDIHDQPLFLFENQFAENWFKQKYPDVKLTAKL</sequence>
<name>RF3_LIMRD</name>
<organism>
    <name type="scientific">Limosilactobacillus reuteri (strain DSM 20016)</name>
    <name type="common">Lactobacillus reuteri</name>
    <dbReference type="NCBI Taxonomy" id="557436"/>
    <lineage>
        <taxon>Bacteria</taxon>
        <taxon>Bacillati</taxon>
        <taxon>Bacillota</taxon>
        <taxon>Bacilli</taxon>
        <taxon>Lactobacillales</taxon>
        <taxon>Lactobacillaceae</taxon>
        <taxon>Limosilactobacillus</taxon>
    </lineage>
</organism>
<gene>
    <name evidence="1" type="primary">prfC</name>
    <name type="ordered locus">Lreu_1351</name>
</gene>
<protein>
    <recommendedName>
        <fullName evidence="1">Peptide chain release factor 3</fullName>
        <shortName evidence="1">RF-3</shortName>
    </recommendedName>
</protein>
<comment type="function">
    <text evidence="1">Increases the formation of ribosomal termination complexes and stimulates activities of RF-1 and RF-2. It binds guanine nucleotides and has strong preference for UGA stop codons. It may interact directly with the ribosome. The stimulation of RF-1 and RF-2 is significantly reduced by GTP and GDP, but not by GMP.</text>
</comment>
<comment type="subcellular location">
    <subcellularLocation>
        <location evidence="1">Cytoplasm</location>
    </subcellularLocation>
</comment>
<comment type="similarity">
    <text evidence="1">Belongs to the TRAFAC class translation factor GTPase superfamily. Classic translation factor GTPase family. PrfC subfamily.</text>
</comment>
<proteinExistence type="inferred from homology"/>
<dbReference type="EMBL" id="CP000705">
    <property type="protein sequence ID" value="ABQ83601.1"/>
    <property type="molecule type" value="Genomic_DNA"/>
</dbReference>
<dbReference type="RefSeq" id="WP_003668625.1">
    <property type="nucleotide sequence ID" value="NZ_AZDD01000052.1"/>
</dbReference>
<dbReference type="SMR" id="A5VL77"/>
<dbReference type="STRING" id="557436.Lreu_1351"/>
<dbReference type="KEGG" id="lre:Lreu_1351"/>
<dbReference type="PATRIC" id="fig|557436.17.peg.1597"/>
<dbReference type="eggNOG" id="COG4108">
    <property type="taxonomic scope" value="Bacteria"/>
</dbReference>
<dbReference type="HOGENOM" id="CLU_002794_2_1_9"/>
<dbReference type="Proteomes" id="UP000001991">
    <property type="component" value="Chromosome"/>
</dbReference>
<dbReference type="GO" id="GO:0005829">
    <property type="term" value="C:cytosol"/>
    <property type="evidence" value="ECO:0007669"/>
    <property type="project" value="TreeGrafter"/>
</dbReference>
<dbReference type="GO" id="GO:0005525">
    <property type="term" value="F:GTP binding"/>
    <property type="evidence" value="ECO:0007669"/>
    <property type="project" value="UniProtKB-UniRule"/>
</dbReference>
<dbReference type="GO" id="GO:0003924">
    <property type="term" value="F:GTPase activity"/>
    <property type="evidence" value="ECO:0007669"/>
    <property type="project" value="InterPro"/>
</dbReference>
<dbReference type="GO" id="GO:0016150">
    <property type="term" value="F:translation release factor activity, codon nonspecific"/>
    <property type="evidence" value="ECO:0007669"/>
    <property type="project" value="TreeGrafter"/>
</dbReference>
<dbReference type="GO" id="GO:0016149">
    <property type="term" value="F:translation release factor activity, codon specific"/>
    <property type="evidence" value="ECO:0007669"/>
    <property type="project" value="UniProtKB-UniRule"/>
</dbReference>
<dbReference type="GO" id="GO:0006449">
    <property type="term" value="P:regulation of translational termination"/>
    <property type="evidence" value="ECO:0007669"/>
    <property type="project" value="UniProtKB-UniRule"/>
</dbReference>
<dbReference type="CDD" id="cd04169">
    <property type="entry name" value="RF3"/>
    <property type="match status" value="1"/>
</dbReference>
<dbReference type="CDD" id="cd03689">
    <property type="entry name" value="RF3_II"/>
    <property type="match status" value="1"/>
</dbReference>
<dbReference type="CDD" id="cd16259">
    <property type="entry name" value="RF3_III"/>
    <property type="match status" value="1"/>
</dbReference>
<dbReference type="FunFam" id="2.40.30.10:FF:000040">
    <property type="entry name" value="Peptide chain release factor 3"/>
    <property type="match status" value="1"/>
</dbReference>
<dbReference type="FunFam" id="3.30.70.3280:FF:000001">
    <property type="entry name" value="Peptide chain release factor 3"/>
    <property type="match status" value="1"/>
</dbReference>
<dbReference type="FunFam" id="3.40.50.300:FF:000542">
    <property type="entry name" value="Peptide chain release factor 3"/>
    <property type="match status" value="1"/>
</dbReference>
<dbReference type="Gene3D" id="3.40.50.300">
    <property type="entry name" value="P-loop containing nucleotide triphosphate hydrolases"/>
    <property type="match status" value="1"/>
</dbReference>
<dbReference type="Gene3D" id="3.30.70.3280">
    <property type="entry name" value="Peptide chain release factor 3, domain III"/>
    <property type="match status" value="1"/>
</dbReference>
<dbReference type="Gene3D" id="2.40.30.10">
    <property type="entry name" value="Translation factors"/>
    <property type="match status" value="1"/>
</dbReference>
<dbReference type="HAMAP" id="MF_00072">
    <property type="entry name" value="Rel_fac_3"/>
    <property type="match status" value="1"/>
</dbReference>
<dbReference type="InterPro" id="IPR053905">
    <property type="entry name" value="EF-G-like_DII"/>
</dbReference>
<dbReference type="InterPro" id="IPR035647">
    <property type="entry name" value="EFG_III/V"/>
</dbReference>
<dbReference type="InterPro" id="IPR031157">
    <property type="entry name" value="G_TR_CS"/>
</dbReference>
<dbReference type="InterPro" id="IPR027417">
    <property type="entry name" value="P-loop_NTPase"/>
</dbReference>
<dbReference type="InterPro" id="IPR004548">
    <property type="entry name" value="PrfC"/>
</dbReference>
<dbReference type="InterPro" id="IPR032090">
    <property type="entry name" value="RF3_C"/>
</dbReference>
<dbReference type="InterPro" id="IPR038467">
    <property type="entry name" value="RF3_dom_3_sf"/>
</dbReference>
<dbReference type="InterPro" id="IPR041732">
    <property type="entry name" value="RF3_GTP-bd"/>
</dbReference>
<dbReference type="InterPro" id="IPR005225">
    <property type="entry name" value="Small_GTP-bd"/>
</dbReference>
<dbReference type="InterPro" id="IPR000795">
    <property type="entry name" value="T_Tr_GTP-bd_dom"/>
</dbReference>
<dbReference type="InterPro" id="IPR009000">
    <property type="entry name" value="Transl_B-barrel_sf"/>
</dbReference>
<dbReference type="NCBIfam" id="TIGR00503">
    <property type="entry name" value="prfC"/>
    <property type="match status" value="1"/>
</dbReference>
<dbReference type="NCBIfam" id="NF001964">
    <property type="entry name" value="PRK00741.1"/>
    <property type="match status" value="1"/>
</dbReference>
<dbReference type="NCBIfam" id="TIGR00231">
    <property type="entry name" value="small_GTP"/>
    <property type="match status" value="1"/>
</dbReference>
<dbReference type="PANTHER" id="PTHR43556">
    <property type="entry name" value="PEPTIDE CHAIN RELEASE FACTOR RF3"/>
    <property type="match status" value="1"/>
</dbReference>
<dbReference type="PANTHER" id="PTHR43556:SF2">
    <property type="entry name" value="PEPTIDE CHAIN RELEASE FACTOR RF3"/>
    <property type="match status" value="1"/>
</dbReference>
<dbReference type="Pfam" id="PF22042">
    <property type="entry name" value="EF-G_D2"/>
    <property type="match status" value="1"/>
</dbReference>
<dbReference type="Pfam" id="PF00009">
    <property type="entry name" value="GTP_EFTU"/>
    <property type="match status" value="1"/>
</dbReference>
<dbReference type="Pfam" id="PF16658">
    <property type="entry name" value="RF3_C"/>
    <property type="match status" value="1"/>
</dbReference>
<dbReference type="PRINTS" id="PR00315">
    <property type="entry name" value="ELONGATNFCT"/>
</dbReference>
<dbReference type="SUPFAM" id="SSF54980">
    <property type="entry name" value="EF-G C-terminal domain-like"/>
    <property type="match status" value="1"/>
</dbReference>
<dbReference type="SUPFAM" id="SSF52540">
    <property type="entry name" value="P-loop containing nucleoside triphosphate hydrolases"/>
    <property type="match status" value="1"/>
</dbReference>
<dbReference type="SUPFAM" id="SSF50447">
    <property type="entry name" value="Translation proteins"/>
    <property type="match status" value="1"/>
</dbReference>
<dbReference type="PROSITE" id="PS00301">
    <property type="entry name" value="G_TR_1"/>
    <property type="match status" value="1"/>
</dbReference>
<dbReference type="PROSITE" id="PS51722">
    <property type="entry name" value="G_TR_2"/>
    <property type="match status" value="1"/>
</dbReference>